<dbReference type="EMBL" id="L19641">
    <property type="protein sequence ID" value="AAA50376.1"/>
    <property type="molecule type" value="Genomic_RNA"/>
</dbReference>
<dbReference type="GlyCosmos" id="Q07920">
    <property type="glycosylation" value="6 sites, No reported glycans"/>
</dbReference>
<dbReference type="GO" id="GO:0020002">
    <property type="term" value="C:host cell plasma membrane"/>
    <property type="evidence" value="ECO:0007669"/>
    <property type="project" value="UniProtKB-SubCell"/>
</dbReference>
<dbReference type="GO" id="GO:0016020">
    <property type="term" value="C:membrane"/>
    <property type="evidence" value="ECO:0007669"/>
    <property type="project" value="UniProtKB-KW"/>
</dbReference>
<dbReference type="GO" id="GO:0019031">
    <property type="term" value="C:viral envelope"/>
    <property type="evidence" value="ECO:0007669"/>
    <property type="project" value="UniProtKB-KW"/>
</dbReference>
<dbReference type="GO" id="GO:0055036">
    <property type="term" value="C:virion membrane"/>
    <property type="evidence" value="ECO:0007669"/>
    <property type="project" value="UniProtKB-SubCell"/>
</dbReference>
<dbReference type="GO" id="GO:0046789">
    <property type="term" value="F:host cell surface receptor binding"/>
    <property type="evidence" value="ECO:0007669"/>
    <property type="project" value="InterPro"/>
</dbReference>
<dbReference type="GO" id="GO:0039654">
    <property type="term" value="P:fusion of virus membrane with host endosome membrane"/>
    <property type="evidence" value="ECO:0007669"/>
    <property type="project" value="UniProtKB-KW"/>
</dbReference>
<dbReference type="GO" id="GO:0019064">
    <property type="term" value="P:fusion of virus membrane with host plasma membrane"/>
    <property type="evidence" value="ECO:0007669"/>
    <property type="project" value="InterPro"/>
</dbReference>
<dbReference type="GO" id="GO:0046718">
    <property type="term" value="P:symbiont entry into host cell"/>
    <property type="evidence" value="ECO:0007669"/>
    <property type="project" value="UniProtKB-KW"/>
</dbReference>
<dbReference type="GO" id="GO:0019062">
    <property type="term" value="P:virion attachment to host cell"/>
    <property type="evidence" value="ECO:0007669"/>
    <property type="project" value="UniProtKB-KW"/>
</dbReference>
<dbReference type="Gene3D" id="3.90.209.20">
    <property type="match status" value="1"/>
</dbReference>
<dbReference type="Gene3D" id="2.10.77.10">
    <property type="entry name" value="Hemagglutinin Chain A, Domain 2"/>
    <property type="match status" value="1"/>
</dbReference>
<dbReference type="InterPro" id="IPR008980">
    <property type="entry name" value="Capsid_hemagglutn"/>
</dbReference>
<dbReference type="InterPro" id="IPR013828">
    <property type="entry name" value="Hemagglutn_HA1_a/b_dom_sf"/>
</dbReference>
<dbReference type="InterPro" id="IPR001364">
    <property type="entry name" value="Hemagglutn_influenz_A/B"/>
</dbReference>
<dbReference type="Pfam" id="PF00509">
    <property type="entry name" value="Hemagglutinin"/>
    <property type="match status" value="1"/>
</dbReference>
<dbReference type="SUPFAM" id="SSF49818">
    <property type="entry name" value="Viral protein domain"/>
    <property type="match status" value="1"/>
</dbReference>
<gene>
    <name type="primary">HA</name>
</gene>
<organismHost>
    <name type="scientific">Homo sapiens</name>
    <name type="common">Human</name>
    <dbReference type="NCBI Taxonomy" id="9606"/>
</organismHost>
<keyword id="KW-1015">Disulfide bond</keyword>
<keyword id="KW-1170">Fusion of virus membrane with host endosomal membrane</keyword>
<keyword id="KW-1168">Fusion of virus membrane with host membrane</keyword>
<keyword id="KW-0325">Glycoprotein</keyword>
<keyword id="KW-0348">Hemagglutinin</keyword>
<keyword id="KW-1032">Host cell membrane</keyword>
<keyword id="KW-1043">Host membrane</keyword>
<keyword id="KW-0945">Host-virus interaction</keyword>
<keyword id="KW-0449">Lipoprotein</keyword>
<keyword id="KW-0472">Membrane</keyword>
<keyword id="KW-0564">Palmitate</keyword>
<keyword id="KW-0812">Transmembrane</keyword>
<keyword id="KW-1161">Viral attachment to host cell</keyword>
<keyword id="KW-0261">Viral envelope protein</keyword>
<keyword id="KW-1162">Viral penetration into host cytoplasm</keyword>
<keyword id="KW-0946">Virion</keyword>
<keyword id="KW-1160">Virus entry into host cell</keyword>
<reference key="1">
    <citation type="journal article" date="1992" name="J. Gen. Virol.">
        <title>Evolution of influenza B/Victoria/2/87-like viruses: occurrence of a genetically conserved virus under conditions of low epidemic activity.</title>
        <authorList>
            <person name="Kinnunen L."/>
            <person name="Ikonen N."/>
            <person name="Poeyry T."/>
            <person name="Pyhaelae R."/>
        </authorList>
    </citation>
    <scope>NUCLEOTIDE SEQUENCE [GENOMIC RNA]</scope>
</reference>
<comment type="function">
    <text>Binds to sialic acid-containing receptors on the cell surface, bringing about the attachment of the virus particle to the cell. Plays a major role in the determination of host range restriction and virulence. Class I viral fusion protein. Responsible for penetration of the virus into the cell cytoplasm by mediating the fusion of the membrane of the endocytosed virus particle with the endosomal membrane. Low pH in endosomes induce an irreversible conformational change in HA2, releasing the fusion hydrophobic peptide. Several trimers are required to form a competent fusion pore.</text>
</comment>
<comment type="subunit">
    <text>Homotrimer of disulfide-linked HA1-HA2.</text>
</comment>
<comment type="subcellular location">
    <subcellularLocation>
        <location evidence="3">Virion membrane</location>
        <topology evidence="3">Single-pass type I membrane protein</topology>
    </subcellularLocation>
    <subcellularLocation>
        <location>Host apical cell membrane</location>
        <topology>Single-pass type I membrane protein</topology>
    </subcellularLocation>
    <text>Targeted to the apical plasma membrane in epithelial polarized cells through a signal present in the transmembrane domain. Associated with glycosphingolipid- and cholesterol-enriched detergent-resistant lipid rafts.</text>
</comment>
<comment type="PTM">
    <text evidence="1">In natural infection, inactive HA is matured into HA1 and HA2 outside the cell by one or more trypsin-like, arginine-specific endoprotease secreted by the bronchial epithelial cells. One identified protease that may be involved in this process is secreted in lungs by club cells (By similarity).</text>
</comment>
<comment type="PTM">
    <text evidence="1">Palmitoylated.</text>
</comment>
<comment type="miscellaneous">
    <text>Major glycoprotein, comprises over 80% of the envelope proteins present in virus particle.</text>
</comment>
<comment type="miscellaneous">
    <text>The extent of infection into host organism is determined by HA. Influenza viruses bud from the apical surface of polarized epithelial cells (e.g. bronchial epithelial cells) into lumen of lungs and are therefore usually pneumotropic. The reason is that HA is cleaved by tryptase clara which is restricted to lungs. However, HAs of H5 and H7 pantropic avian viruses subtypes can be cleaved by furin and subtilisin-type enzymes, allowing the virus to grow in other organs than lungs.</text>
</comment>
<comment type="miscellaneous">
    <text>The influenza B genome consist of 8 RNA segments. Genetic variation of hemagglutinin and/or neuraminidase genes results in the emergence of new influenza strains. The mechanism of variation can be the result of point mutations or the result of genetic reassortment between segments of two different strains.</text>
</comment>
<comment type="similarity">
    <text evidence="3">Belongs to the influenza viruses hemagglutinin family.</text>
</comment>
<feature type="chain" id="PRO_0000039101" description="Hemagglutinin HA1 chain">
    <location>
        <begin position="1"/>
        <end position="346"/>
    </location>
</feature>
<feature type="glycosylation site" description="N-linked (GlcNAc...) asparagine; by host" evidence="2">
    <location>
        <position position="25"/>
    </location>
</feature>
<feature type="glycosylation site" description="N-linked (GlcNAc...) asparagine; by host" evidence="2">
    <location>
        <position position="59"/>
    </location>
</feature>
<feature type="glycosylation site" description="N-linked (GlcNAc...) asparagine; by host" evidence="2">
    <location>
        <position position="145"/>
    </location>
</feature>
<feature type="glycosylation site" description="N-linked (GlcNAc...) asparagine; by host" evidence="2">
    <location>
        <position position="166"/>
    </location>
</feature>
<feature type="glycosylation site" description="N-linked (GlcNAc...) asparagine; by host" evidence="2">
    <location>
        <position position="304"/>
    </location>
</feature>
<feature type="glycosylation site" description="N-linked (GlcNAc...) asparagine; by host" evidence="2">
    <location>
        <position position="333"/>
    </location>
</feature>
<feature type="non-terminal residue">
    <location>
        <position position="1"/>
    </location>
</feature>
<feature type="non-terminal residue">
    <location>
        <position position="347"/>
    </location>
</feature>
<sequence>DRICTGITSSNSPHVVKTATQGEVNVTGVIPLTTTPTKSHFANLKGTKTRGKLCPKCLNCTDLDVALGRPKCTGTIPSAKASILHEVKPVTSGCFPIMHDRTKXRQLPNLLRGYEHIRLSTHNVINAEKAPGGPYKIGTSGSCPNVTNGNGFFATMAWAVPKNDNNKTATNSLTVEVPYICTEGEDQITVWGFHSDNEIQMVKLYGDSKPQKFTSSANGVTTHYVSQIGGFPNQAEDGGLPQSGRIVVDYMVQKSGKTGTITYQRGILLPQKVWCASGRSKVIKGSLPLIGEADCLHEKYGGLNKSKPYYTGEHAKAIGNCPIWVKTPLKLANGTKYRPPAKLLKER</sequence>
<name>HEMA_INBF9</name>
<proteinExistence type="inferred from homology"/>
<organism>
    <name type="scientific">Influenza B virus (strain B/Finland/151/1990)</name>
    <dbReference type="NCBI Taxonomy" id="38995"/>
    <lineage>
        <taxon>Viruses</taxon>
        <taxon>Riboviria</taxon>
        <taxon>Orthornavirae</taxon>
        <taxon>Negarnaviricota</taxon>
        <taxon>Polyploviricotina</taxon>
        <taxon>Insthoviricetes</taxon>
        <taxon>Articulavirales</taxon>
        <taxon>Orthomyxoviridae</taxon>
        <taxon>Betainfluenzavirus</taxon>
        <taxon>Betainfluenzavirus influenzae</taxon>
        <taxon>Influenza B virus</taxon>
    </lineage>
</organism>
<accession>Q07920</accession>
<evidence type="ECO:0000250" key="1"/>
<evidence type="ECO:0000255" key="2"/>
<evidence type="ECO:0000305" key="3"/>
<protein>
    <recommendedName>
        <fullName>Hemagglutinin</fullName>
    </recommendedName>
    <component>
        <recommendedName>
            <fullName>Hemagglutinin HA1 chain</fullName>
        </recommendedName>
    </component>
</protein>